<proteinExistence type="inferred from homology"/>
<protein>
    <recommendedName>
        <fullName evidence="1">Inosine-5'-monophosphate dehydrogenase</fullName>
        <shortName evidence="1">IMP dehydrogenase</shortName>
        <shortName evidence="1">IMPD</shortName>
        <shortName evidence="1">IMPDH</shortName>
        <ecNumber evidence="1">1.1.1.205</ecNumber>
    </recommendedName>
</protein>
<dbReference type="EC" id="1.1.1.205" evidence="1"/>
<dbReference type="EMBL" id="AE000657">
    <property type="protein sequence ID" value="AAC07779.1"/>
    <property type="molecule type" value="Genomic_DNA"/>
</dbReference>
<dbReference type="PIR" id="H70473">
    <property type="entry name" value="H70473"/>
</dbReference>
<dbReference type="RefSeq" id="NP_214389.1">
    <property type="nucleotide sequence ID" value="NC_000918.1"/>
</dbReference>
<dbReference type="RefSeq" id="WP_010881325.1">
    <property type="nucleotide sequence ID" value="NC_000918.1"/>
</dbReference>
<dbReference type="SMR" id="O67820"/>
<dbReference type="FunCoup" id="O67820">
    <property type="interactions" value="338"/>
</dbReference>
<dbReference type="STRING" id="224324.aq_2023"/>
<dbReference type="EnsemblBacteria" id="AAC07779">
    <property type="protein sequence ID" value="AAC07779"/>
    <property type="gene ID" value="aq_2023"/>
</dbReference>
<dbReference type="KEGG" id="aae:aq_2023"/>
<dbReference type="PATRIC" id="fig|224324.8.peg.1566"/>
<dbReference type="eggNOG" id="COG0516">
    <property type="taxonomic scope" value="Bacteria"/>
</dbReference>
<dbReference type="eggNOG" id="COG0517">
    <property type="taxonomic scope" value="Bacteria"/>
</dbReference>
<dbReference type="HOGENOM" id="CLU_022552_0_1_0"/>
<dbReference type="InParanoid" id="O67820"/>
<dbReference type="OrthoDB" id="9805398at2"/>
<dbReference type="UniPathway" id="UPA00601">
    <property type="reaction ID" value="UER00295"/>
</dbReference>
<dbReference type="Proteomes" id="UP000000798">
    <property type="component" value="Chromosome"/>
</dbReference>
<dbReference type="GO" id="GO:0003938">
    <property type="term" value="F:IMP dehydrogenase activity"/>
    <property type="evidence" value="ECO:0000318"/>
    <property type="project" value="GO_Central"/>
</dbReference>
<dbReference type="GO" id="GO:0046872">
    <property type="term" value="F:metal ion binding"/>
    <property type="evidence" value="ECO:0007669"/>
    <property type="project" value="UniProtKB-UniRule"/>
</dbReference>
<dbReference type="GO" id="GO:0000166">
    <property type="term" value="F:nucleotide binding"/>
    <property type="evidence" value="ECO:0007669"/>
    <property type="project" value="UniProtKB-UniRule"/>
</dbReference>
<dbReference type="GO" id="GO:0006177">
    <property type="term" value="P:GMP biosynthetic process"/>
    <property type="evidence" value="ECO:0007669"/>
    <property type="project" value="UniProtKB-UniRule"/>
</dbReference>
<dbReference type="GO" id="GO:0006183">
    <property type="term" value="P:GTP biosynthetic process"/>
    <property type="evidence" value="ECO:0000318"/>
    <property type="project" value="GO_Central"/>
</dbReference>
<dbReference type="CDD" id="cd04601">
    <property type="entry name" value="CBS_pair_IMPDH"/>
    <property type="match status" value="1"/>
</dbReference>
<dbReference type="CDD" id="cd00381">
    <property type="entry name" value="IMPDH"/>
    <property type="match status" value="1"/>
</dbReference>
<dbReference type="FunFam" id="3.20.20.70:FF:000003">
    <property type="entry name" value="GMP reductase"/>
    <property type="match status" value="1"/>
</dbReference>
<dbReference type="Gene3D" id="3.20.20.70">
    <property type="entry name" value="Aldolase class I"/>
    <property type="match status" value="1"/>
</dbReference>
<dbReference type="HAMAP" id="MF_01964">
    <property type="entry name" value="IMPDH"/>
    <property type="match status" value="1"/>
</dbReference>
<dbReference type="InterPro" id="IPR013785">
    <property type="entry name" value="Aldolase_TIM"/>
</dbReference>
<dbReference type="InterPro" id="IPR000644">
    <property type="entry name" value="CBS_dom"/>
</dbReference>
<dbReference type="InterPro" id="IPR046342">
    <property type="entry name" value="CBS_dom_sf"/>
</dbReference>
<dbReference type="InterPro" id="IPR005990">
    <property type="entry name" value="IMP_DH"/>
</dbReference>
<dbReference type="InterPro" id="IPR015875">
    <property type="entry name" value="IMP_DH/GMP_Rdtase_CS"/>
</dbReference>
<dbReference type="InterPro" id="IPR001093">
    <property type="entry name" value="IMP_DH_GMPRt"/>
</dbReference>
<dbReference type="NCBIfam" id="TIGR01302">
    <property type="entry name" value="IMP_dehydrog"/>
    <property type="match status" value="1"/>
</dbReference>
<dbReference type="PANTHER" id="PTHR11911:SF111">
    <property type="entry name" value="INOSINE-5'-MONOPHOSPHATE DEHYDROGENASE"/>
    <property type="match status" value="1"/>
</dbReference>
<dbReference type="PANTHER" id="PTHR11911">
    <property type="entry name" value="INOSINE-5-MONOPHOSPHATE DEHYDROGENASE RELATED"/>
    <property type="match status" value="1"/>
</dbReference>
<dbReference type="Pfam" id="PF00571">
    <property type="entry name" value="CBS"/>
    <property type="match status" value="2"/>
</dbReference>
<dbReference type="Pfam" id="PF00478">
    <property type="entry name" value="IMPDH"/>
    <property type="match status" value="1"/>
</dbReference>
<dbReference type="PIRSF" id="PIRSF000130">
    <property type="entry name" value="IMPDH"/>
    <property type="match status" value="1"/>
</dbReference>
<dbReference type="SMART" id="SM00116">
    <property type="entry name" value="CBS"/>
    <property type="match status" value="2"/>
</dbReference>
<dbReference type="SMART" id="SM01240">
    <property type="entry name" value="IMPDH"/>
    <property type="match status" value="1"/>
</dbReference>
<dbReference type="SUPFAM" id="SSF54631">
    <property type="entry name" value="CBS-domain pair"/>
    <property type="match status" value="1"/>
</dbReference>
<dbReference type="SUPFAM" id="SSF51412">
    <property type="entry name" value="Inosine monophosphate dehydrogenase (IMPDH)"/>
    <property type="match status" value="1"/>
</dbReference>
<dbReference type="PROSITE" id="PS51371">
    <property type="entry name" value="CBS"/>
    <property type="match status" value="2"/>
</dbReference>
<dbReference type="PROSITE" id="PS00487">
    <property type="entry name" value="IMP_DH_GMP_RED"/>
    <property type="match status" value="1"/>
</dbReference>
<evidence type="ECO:0000255" key="1">
    <source>
        <dbReference type="HAMAP-Rule" id="MF_01964"/>
    </source>
</evidence>
<accession>O67820</accession>
<reference key="1">
    <citation type="journal article" date="1998" name="Nature">
        <title>The complete genome of the hyperthermophilic bacterium Aquifex aeolicus.</title>
        <authorList>
            <person name="Deckert G."/>
            <person name="Warren P.V."/>
            <person name="Gaasterland T."/>
            <person name="Young W.G."/>
            <person name="Lenox A.L."/>
            <person name="Graham D.E."/>
            <person name="Overbeek R."/>
            <person name="Snead M.A."/>
            <person name="Keller M."/>
            <person name="Aujay M."/>
            <person name="Huber R."/>
            <person name="Feldman R.A."/>
            <person name="Short J.M."/>
            <person name="Olsen G.J."/>
            <person name="Swanson R.V."/>
        </authorList>
    </citation>
    <scope>NUCLEOTIDE SEQUENCE [LARGE SCALE GENOMIC DNA]</scope>
    <source>
        <strain>VF5</strain>
    </source>
</reference>
<organism>
    <name type="scientific">Aquifex aeolicus (strain VF5)</name>
    <dbReference type="NCBI Taxonomy" id="224324"/>
    <lineage>
        <taxon>Bacteria</taxon>
        <taxon>Pseudomonadati</taxon>
        <taxon>Aquificota</taxon>
        <taxon>Aquificia</taxon>
        <taxon>Aquificales</taxon>
        <taxon>Aquificaceae</taxon>
        <taxon>Aquifex</taxon>
    </lineage>
</organism>
<comment type="function">
    <text evidence="1">Catalyzes the conversion of inosine 5'-phosphate (IMP) to xanthosine 5'-phosphate (XMP), the first committed and rate-limiting step in the de novo synthesis of guanine nucleotides, and therefore plays an important role in the regulation of cell growth.</text>
</comment>
<comment type="catalytic activity">
    <reaction evidence="1">
        <text>IMP + NAD(+) + H2O = XMP + NADH + H(+)</text>
        <dbReference type="Rhea" id="RHEA:11708"/>
        <dbReference type="ChEBI" id="CHEBI:15377"/>
        <dbReference type="ChEBI" id="CHEBI:15378"/>
        <dbReference type="ChEBI" id="CHEBI:57464"/>
        <dbReference type="ChEBI" id="CHEBI:57540"/>
        <dbReference type="ChEBI" id="CHEBI:57945"/>
        <dbReference type="ChEBI" id="CHEBI:58053"/>
        <dbReference type="EC" id="1.1.1.205"/>
    </reaction>
</comment>
<comment type="cofactor">
    <cofactor evidence="1">
        <name>K(+)</name>
        <dbReference type="ChEBI" id="CHEBI:29103"/>
    </cofactor>
</comment>
<comment type="activity regulation">
    <text evidence="1">Mycophenolic acid (MPA) is a non-competitive inhibitor that prevents formation of the closed enzyme conformation by binding to the same site as the amobile flap. In contrast, mizoribine monophosphate (MZP) is a competitive inhibitor that induces the closed conformation. MPA is a potent inhibitor of mammalian IMPDHs but a poor inhibitor of the bacterial enzymes. MZP is a more potent inhibitor of bacterial IMPDH.</text>
</comment>
<comment type="pathway">
    <text evidence="1">Purine metabolism; XMP biosynthesis via de novo pathway; XMP from IMP: step 1/1.</text>
</comment>
<comment type="subunit">
    <text evidence="1">Homotetramer.</text>
</comment>
<comment type="similarity">
    <text evidence="1">Belongs to the IMPDH/GMPR family.</text>
</comment>
<sequence length="490" mass="53401">MVEVEKKIKEGLTFDDVLLVPQYSEVLPHEVDVSTYLTKRIKLNIPIVSAAMDTVTEARLAIALAREGGIGIIHRNLPIKKQAEEVEKVKKSESGMIINPVTVKPDTRVKEALDIMAKYKISGVPVVDEERKLIGILTNRDLRFIKPEDYSKPVSEFMTKENLITAPEGITLDEAEEIFRKYKIEKLPIVDKEGKIKGLITIKDIVKRKKYPNACKDELGRLRVGAAVGTGEETLDRVAALVEAGVDVIVVDTAHGHSKRVLETVEKIKANFPEVDVIAGNVATAEGTKALIEAGADAVKVGVGPGSICTTRIVAGVGVPQLTAIMEAASAAREYDIPIIADGGIRYSGDIVKALAAGASAVMLGNLLAGTEEAPGETIYYQGRAYKVYRGMGSLGAMSSRLSSDRYGQEKMEKFVPEGIEGRVPYKGKLADVVYQLVGGLRSGMGYVGARNIKELQEKAKFVRITWAGYRESHVHDVQITREAPNYWVD</sequence>
<feature type="chain" id="PRO_0000093689" description="Inosine-5'-monophosphate dehydrogenase">
    <location>
        <begin position="1"/>
        <end position="490"/>
    </location>
</feature>
<feature type="domain" description="CBS 1" evidence="1">
    <location>
        <begin position="96"/>
        <end position="154"/>
    </location>
</feature>
<feature type="domain" description="CBS 2" evidence="1">
    <location>
        <begin position="158"/>
        <end position="218"/>
    </location>
</feature>
<feature type="active site" description="Thioimidate intermediate" evidence="1">
    <location>
        <position position="309"/>
    </location>
</feature>
<feature type="active site" description="Proton acceptor" evidence="1">
    <location>
        <position position="406"/>
    </location>
</feature>
<feature type="binding site" evidence="1">
    <location>
        <position position="252"/>
    </location>
    <ligand>
        <name>NAD(+)</name>
        <dbReference type="ChEBI" id="CHEBI:57540"/>
    </ligand>
</feature>
<feature type="binding site" evidence="1">
    <location>
        <begin position="302"/>
        <end position="304"/>
    </location>
    <ligand>
        <name>NAD(+)</name>
        <dbReference type="ChEBI" id="CHEBI:57540"/>
    </ligand>
</feature>
<feature type="binding site" description="in other chain" evidence="1">
    <location>
        <position position="304"/>
    </location>
    <ligand>
        <name>K(+)</name>
        <dbReference type="ChEBI" id="CHEBI:29103"/>
        <note>ligand shared between two tetrameric partners</note>
    </ligand>
</feature>
<feature type="binding site" description="in other chain" evidence="1">
    <location>
        <position position="306"/>
    </location>
    <ligand>
        <name>K(+)</name>
        <dbReference type="ChEBI" id="CHEBI:29103"/>
        <note>ligand shared between two tetrameric partners</note>
    </ligand>
</feature>
<feature type="binding site" evidence="1">
    <location>
        <position position="307"/>
    </location>
    <ligand>
        <name>IMP</name>
        <dbReference type="ChEBI" id="CHEBI:58053"/>
    </ligand>
</feature>
<feature type="binding site" description="in other chain" evidence="1">
    <location>
        <position position="309"/>
    </location>
    <ligand>
        <name>K(+)</name>
        <dbReference type="ChEBI" id="CHEBI:29103"/>
        <note>ligand shared between two tetrameric partners</note>
    </ligand>
</feature>
<feature type="binding site" evidence="1">
    <location>
        <begin position="342"/>
        <end position="344"/>
    </location>
    <ligand>
        <name>IMP</name>
        <dbReference type="ChEBI" id="CHEBI:58053"/>
    </ligand>
</feature>
<feature type="binding site" evidence="1">
    <location>
        <begin position="365"/>
        <end position="366"/>
    </location>
    <ligand>
        <name>IMP</name>
        <dbReference type="ChEBI" id="CHEBI:58053"/>
    </ligand>
</feature>
<feature type="binding site" evidence="1">
    <location>
        <begin position="389"/>
        <end position="393"/>
    </location>
    <ligand>
        <name>IMP</name>
        <dbReference type="ChEBI" id="CHEBI:58053"/>
    </ligand>
</feature>
<feature type="binding site" evidence="1">
    <location>
        <position position="418"/>
    </location>
    <ligand>
        <name>IMP</name>
        <dbReference type="ChEBI" id="CHEBI:58053"/>
    </ligand>
</feature>
<feature type="binding site" evidence="1">
    <location>
        <position position="472"/>
    </location>
    <ligand>
        <name>K(+)</name>
        <dbReference type="ChEBI" id="CHEBI:29103"/>
        <note>ligand shared between two tetrameric partners</note>
    </ligand>
</feature>
<feature type="binding site" evidence="1">
    <location>
        <position position="473"/>
    </location>
    <ligand>
        <name>K(+)</name>
        <dbReference type="ChEBI" id="CHEBI:29103"/>
        <note>ligand shared between two tetrameric partners</note>
    </ligand>
</feature>
<feature type="binding site" evidence="1">
    <location>
        <position position="474"/>
    </location>
    <ligand>
        <name>K(+)</name>
        <dbReference type="ChEBI" id="CHEBI:29103"/>
        <note>ligand shared between two tetrameric partners</note>
    </ligand>
</feature>
<gene>
    <name evidence="1" type="primary">guaB</name>
    <name type="ordered locus">aq_2023</name>
</gene>
<keyword id="KW-0129">CBS domain</keyword>
<keyword id="KW-0332">GMP biosynthesis</keyword>
<keyword id="KW-0479">Metal-binding</keyword>
<keyword id="KW-0520">NAD</keyword>
<keyword id="KW-0560">Oxidoreductase</keyword>
<keyword id="KW-0630">Potassium</keyword>
<keyword id="KW-0658">Purine biosynthesis</keyword>
<keyword id="KW-1185">Reference proteome</keyword>
<keyword id="KW-0677">Repeat</keyword>
<name>IMDH_AQUAE</name>